<proteinExistence type="inferred from homology"/>
<protein>
    <recommendedName>
        <fullName evidence="1">Cytoplasmic trehalase</fullName>
        <ecNumber evidence="1">3.2.1.28</ecNumber>
    </recommendedName>
    <alternativeName>
        <fullName evidence="1">Alpha,alpha-trehalase</fullName>
    </alternativeName>
    <alternativeName>
        <fullName evidence="1">Alpha,alpha-trehalose glucohydrolase</fullName>
    </alternativeName>
</protein>
<name>TREF_SHIBS</name>
<dbReference type="EC" id="3.2.1.28" evidence="1"/>
<dbReference type="EMBL" id="CP000036">
    <property type="protein sequence ID" value="ABB68002.1"/>
    <property type="molecule type" value="Genomic_DNA"/>
</dbReference>
<dbReference type="RefSeq" id="WP_000934213.1">
    <property type="nucleotide sequence ID" value="NC_007613.1"/>
</dbReference>
<dbReference type="SMR" id="Q31VA6"/>
<dbReference type="CAZy" id="GH37">
    <property type="family name" value="Glycoside Hydrolase Family 37"/>
</dbReference>
<dbReference type="KEGG" id="sbo:SBO_3518"/>
<dbReference type="HOGENOM" id="CLU_006451_3_1_6"/>
<dbReference type="UniPathway" id="UPA00300">
    <property type="reaction ID" value="UER00535"/>
</dbReference>
<dbReference type="Proteomes" id="UP000007067">
    <property type="component" value="Chromosome"/>
</dbReference>
<dbReference type="GO" id="GO:0005737">
    <property type="term" value="C:cytoplasm"/>
    <property type="evidence" value="ECO:0007669"/>
    <property type="project" value="UniProtKB-SubCell"/>
</dbReference>
<dbReference type="GO" id="GO:0004555">
    <property type="term" value="F:alpha,alpha-trehalase activity"/>
    <property type="evidence" value="ECO:0007669"/>
    <property type="project" value="UniProtKB-UniRule"/>
</dbReference>
<dbReference type="GO" id="GO:0071474">
    <property type="term" value="P:cellular hyperosmotic response"/>
    <property type="evidence" value="ECO:0007669"/>
    <property type="project" value="InterPro"/>
</dbReference>
<dbReference type="GO" id="GO:0005993">
    <property type="term" value="P:trehalose catabolic process"/>
    <property type="evidence" value="ECO:0007669"/>
    <property type="project" value="UniProtKB-UniRule"/>
</dbReference>
<dbReference type="FunFam" id="1.50.10.10:FF:000003">
    <property type="entry name" value="Cytoplasmic trehalase"/>
    <property type="match status" value="1"/>
</dbReference>
<dbReference type="Gene3D" id="1.50.10.10">
    <property type="match status" value="1"/>
</dbReference>
<dbReference type="HAMAP" id="MF_01059">
    <property type="entry name" value="Cyt_trehalase"/>
    <property type="match status" value="1"/>
</dbReference>
<dbReference type="InterPro" id="IPR008928">
    <property type="entry name" value="6-hairpin_glycosidase_sf"/>
</dbReference>
<dbReference type="InterPro" id="IPR012341">
    <property type="entry name" value="6hp_glycosidase-like_sf"/>
</dbReference>
<dbReference type="InterPro" id="IPR023715">
    <property type="entry name" value="Cyt_trehalase"/>
</dbReference>
<dbReference type="InterPro" id="IPR001661">
    <property type="entry name" value="Glyco_hydro_37"/>
</dbReference>
<dbReference type="InterPro" id="IPR018232">
    <property type="entry name" value="Glyco_hydro_37_CS"/>
</dbReference>
<dbReference type="NCBIfam" id="NF009773">
    <property type="entry name" value="PRK13270.1"/>
    <property type="match status" value="1"/>
</dbReference>
<dbReference type="NCBIfam" id="NF009774">
    <property type="entry name" value="PRK13271.1"/>
    <property type="match status" value="1"/>
</dbReference>
<dbReference type="PANTHER" id="PTHR23403:SF8">
    <property type="entry name" value="CYTOPLASMIC TREHALASE"/>
    <property type="match status" value="1"/>
</dbReference>
<dbReference type="PANTHER" id="PTHR23403">
    <property type="entry name" value="TREHALASE"/>
    <property type="match status" value="1"/>
</dbReference>
<dbReference type="Pfam" id="PF01204">
    <property type="entry name" value="Trehalase"/>
    <property type="match status" value="1"/>
</dbReference>
<dbReference type="PRINTS" id="PR00744">
    <property type="entry name" value="GLHYDRLASE37"/>
</dbReference>
<dbReference type="SUPFAM" id="SSF48208">
    <property type="entry name" value="Six-hairpin glycosidases"/>
    <property type="match status" value="1"/>
</dbReference>
<dbReference type="PROSITE" id="PS00927">
    <property type="entry name" value="TREHALASE_1"/>
    <property type="match status" value="1"/>
</dbReference>
<dbReference type="PROSITE" id="PS00928">
    <property type="entry name" value="TREHALASE_2"/>
    <property type="match status" value="1"/>
</dbReference>
<keyword id="KW-0963">Cytoplasm</keyword>
<keyword id="KW-0326">Glycosidase</keyword>
<keyword id="KW-0378">Hydrolase</keyword>
<comment type="function">
    <text evidence="1">Hydrolyzes trehalose to glucose. Could be involved, in cells returning to low osmolarity conditions, in the utilization of the accumulated cytoplasmic trehalose, which was synthesized in response to high osmolarity.</text>
</comment>
<comment type="catalytic activity">
    <reaction evidence="1">
        <text>alpha,alpha-trehalose + H2O = alpha-D-glucose + beta-D-glucose</text>
        <dbReference type="Rhea" id="RHEA:32675"/>
        <dbReference type="ChEBI" id="CHEBI:15377"/>
        <dbReference type="ChEBI" id="CHEBI:15903"/>
        <dbReference type="ChEBI" id="CHEBI:16551"/>
        <dbReference type="ChEBI" id="CHEBI:17925"/>
        <dbReference type="EC" id="3.2.1.28"/>
    </reaction>
</comment>
<comment type="pathway">
    <text evidence="1">Glycan degradation; trehalose degradation; D-glucose from alpha,alpha-trehalose: step 1/1.</text>
</comment>
<comment type="subunit">
    <text evidence="1">Monomer.</text>
</comment>
<comment type="subcellular location">
    <subcellularLocation>
        <location evidence="1">Cytoplasm</location>
    </subcellularLocation>
</comment>
<comment type="similarity">
    <text evidence="1">Belongs to the glycosyl hydrolase 37 family.</text>
</comment>
<sequence length="549" mass="63711">MLNQKIQNPNPDELMIEVDLCYELDPYELKLDEMIEAEPEPEMIEGLPASDALTPADRYLELFEHVQSAKIFPDSKTFPDCAPKMDPLDILIRYRKVRRHRDFDLRKFVENHFWLPEVYSSEYVSDPQNSLKEHIDQLWPVLTREPQDHIPWSSLLALPQSYIVPGGRFSETYYWDSYFTMLGLAESGREDLLKCMADNFAWMIENYGHIPNGNRTYYLSRSQPPVFALMVELFEEDGVRGARRYLDHLKMEYAFWMDGAESLIPNQAYRHVVRMPDGSLLNRYWDDRDTPRDESWLEDVETAKHSGRPPNEVYRDLRAGAASGWDYSSRWLRDTGRLASIRTTQFIPIDLNAFLFKLESAIANISALKGEKETEALFRQKASARRDAVKRYLWDDENGIYRDYDWRREQLALFSAAAIVPLYVGMANHEQADRLANAVRSRLLTPGGILASEYETGEQWDKPNGWAPLQWMAIQGFKMYGDDLLGDEIARSWLKTVNQFYLEQHKLIEKYHIADGVPREGGGGEYPLQDGFGWTNGVVRRLIGLYGEP</sequence>
<feature type="chain" id="PRO_1000064446" description="Cytoplasmic trehalase">
    <location>
        <begin position="1"/>
        <end position="549"/>
    </location>
</feature>
<feature type="active site" description="Proton donor/acceptor" evidence="1">
    <location>
        <position position="326"/>
    </location>
</feature>
<feature type="active site" description="Proton donor/acceptor" evidence="1">
    <location>
        <position position="509"/>
    </location>
</feature>
<feature type="binding site" evidence="1">
    <location>
        <position position="168"/>
    </location>
    <ligand>
        <name>substrate</name>
    </ligand>
</feature>
<feature type="binding site" evidence="1">
    <location>
        <begin position="175"/>
        <end position="176"/>
    </location>
    <ligand>
        <name>substrate</name>
    </ligand>
</feature>
<feature type="binding site" evidence="1">
    <location>
        <position position="212"/>
    </location>
    <ligand>
        <name>substrate</name>
    </ligand>
</feature>
<feature type="binding site" evidence="1">
    <location>
        <begin position="221"/>
        <end position="223"/>
    </location>
    <ligand>
        <name>substrate</name>
    </ligand>
</feature>
<feature type="binding site" evidence="1">
    <location>
        <begin position="292"/>
        <end position="294"/>
    </location>
    <ligand>
        <name>substrate</name>
    </ligand>
</feature>
<feature type="binding site" evidence="1">
    <location>
        <position position="324"/>
    </location>
    <ligand>
        <name>substrate</name>
    </ligand>
</feature>
<feature type="binding site" evidence="1">
    <location>
        <position position="525"/>
    </location>
    <ligand>
        <name>substrate</name>
    </ligand>
</feature>
<accession>Q31VA6</accession>
<gene>
    <name evidence="1" type="primary">treF</name>
    <name type="ordered locus">SBO_3518</name>
</gene>
<organism>
    <name type="scientific">Shigella boydii serotype 4 (strain Sb227)</name>
    <dbReference type="NCBI Taxonomy" id="300268"/>
    <lineage>
        <taxon>Bacteria</taxon>
        <taxon>Pseudomonadati</taxon>
        <taxon>Pseudomonadota</taxon>
        <taxon>Gammaproteobacteria</taxon>
        <taxon>Enterobacterales</taxon>
        <taxon>Enterobacteriaceae</taxon>
        <taxon>Shigella</taxon>
    </lineage>
</organism>
<reference key="1">
    <citation type="journal article" date="2005" name="Nucleic Acids Res.">
        <title>Genome dynamics and diversity of Shigella species, the etiologic agents of bacillary dysentery.</title>
        <authorList>
            <person name="Yang F."/>
            <person name="Yang J."/>
            <person name="Zhang X."/>
            <person name="Chen L."/>
            <person name="Jiang Y."/>
            <person name="Yan Y."/>
            <person name="Tang X."/>
            <person name="Wang J."/>
            <person name="Xiong Z."/>
            <person name="Dong J."/>
            <person name="Xue Y."/>
            <person name="Zhu Y."/>
            <person name="Xu X."/>
            <person name="Sun L."/>
            <person name="Chen S."/>
            <person name="Nie H."/>
            <person name="Peng J."/>
            <person name="Xu J."/>
            <person name="Wang Y."/>
            <person name="Yuan Z."/>
            <person name="Wen Y."/>
            <person name="Yao Z."/>
            <person name="Shen Y."/>
            <person name="Qiang B."/>
            <person name="Hou Y."/>
            <person name="Yu J."/>
            <person name="Jin Q."/>
        </authorList>
    </citation>
    <scope>NUCLEOTIDE SEQUENCE [LARGE SCALE GENOMIC DNA]</scope>
    <source>
        <strain>Sb227</strain>
    </source>
</reference>
<evidence type="ECO:0000255" key="1">
    <source>
        <dbReference type="HAMAP-Rule" id="MF_01059"/>
    </source>
</evidence>